<gene>
    <name type="primary">PSF2</name>
    <name type="ORF">FGRRES_05247</name>
    <name type="ORF">FGSG_05247</name>
</gene>
<sequence>MALPLPSGLTPSEVAFLCEMELVTVVPRQRLESIELLTGTTPALRPPHRSNLPLWLAILLKKQRRANIVPPPWLHPDSLRDIVHQETMVDRKGWAPPPPPPARADSRGNARNPFMDDETVLSPPFLPSCTSDAPAGALPYHWFEVAEMLLAHASDDISSSSEVRSLLRDLQEVRAAKMRSSTAQLEGGVDGVMSLRGVGAMELAESRGFVIGVVEGVRKLGASTETTRREEEEEGGGQESDEQSDEDMGL</sequence>
<proteinExistence type="inferred from homology"/>
<name>PSF2_GIBZE</name>
<feature type="chain" id="PRO_0000255425" description="DNA replication complex GINS protein PSF2">
    <location>
        <begin position="1"/>
        <end position="250"/>
    </location>
</feature>
<feature type="region of interest" description="Disordered" evidence="2">
    <location>
        <begin position="220"/>
        <end position="250"/>
    </location>
</feature>
<feature type="compositionally biased region" description="Acidic residues" evidence="2">
    <location>
        <begin position="231"/>
        <end position="250"/>
    </location>
</feature>
<keyword id="KW-0159">Chromosome partition</keyword>
<keyword id="KW-0235">DNA replication</keyword>
<keyword id="KW-0539">Nucleus</keyword>
<keyword id="KW-1185">Reference proteome</keyword>
<evidence type="ECO:0000250" key="1"/>
<evidence type="ECO:0000256" key="2">
    <source>
        <dbReference type="SAM" id="MobiDB-lite"/>
    </source>
</evidence>
<evidence type="ECO:0000305" key="3"/>
<organism>
    <name type="scientific">Gibberella zeae (strain ATCC MYA-4620 / CBS 123657 / FGSC 9075 / NRRL 31084 / PH-1)</name>
    <name type="common">Wheat head blight fungus</name>
    <name type="synonym">Fusarium graminearum</name>
    <dbReference type="NCBI Taxonomy" id="229533"/>
    <lineage>
        <taxon>Eukaryota</taxon>
        <taxon>Fungi</taxon>
        <taxon>Dikarya</taxon>
        <taxon>Ascomycota</taxon>
        <taxon>Pezizomycotina</taxon>
        <taxon>Sordariomycetes</taxon>
        <taxon>Hypocreomycetidae</taxon>
        <taxon>Hypocreales</taxon>
        <taxon>Nectriaceae</taxon>
        <taxon>Fusarium</taxon>
    </lineage>
</organism>
<reference key="1">
    <citation type="journal article" date="2007" name="Science">
        <title>The Fusarium graminearum genome reveals a link between localized polymorphism and pathogen specialization.</title>
        <authorList>
            <person name="Cuomo C.A."/>
            <person name="Gueldener U."/>
            <person name="Xu J.-R."/>
            <person name="Trail F."/>
            <person name="Turgeon B.G."/>
            <person name="Di Pietro A."/>
            <person name="Walton J.D."/>
            <person name="Ma L.-J."/>
            <person name="Baker S.E."/>
            <person name="Rep M."/>
            <person name="Adam G."/>
            <person name="Antoniw J."/>
            <person name="Baldwin T."/>
            <person name="Calvo S.E."/>
            <person name="Chang Y.-L."/>
            <person name="DeCaprio D."/>
            <person name="Gale L.R."/>
            <person name="Gnerre S."/>
            <person name="Goswami R.S."/>
            <person name="Hammond-Kosack K."/>
            <person name="Harris L.J."/>
            <person name="Hilburn K."/>
            <person name="Kennell J.C."/>
            <person name="Kroken S."/>
            <person name="Magnuson J.K."/>
            <person name="Mannhaupt G."/>
            <person name="Mauceli E.W."/>
            <person name="Mewes H.-W."/>
            <person name="Mitterbauer R."/>
            <person name="Muehlbauer G."/>
            <person name="Muensterkoetter M."/>
            <person name="Nelson D."/>
            <person name="O'Donnell K."/>
            <person name="Ouellet T."/>
            <person name="Qi W."/>
            <person name="Quesneville H."/>
            <person name="Roncero M.I.G."/>
            <person name="Seong K.-Y."/>
            <person name="Tetko I.V."/>
            <person name="Urban M."/>
            <person name="Waalwijk C."/>
            <person name="Ward T.J."/>
            <person name="Yao J."/>
            <person name="Birren B.W."/>
            <person name="Kistler H.C."/>
        </authorList>
    </citation>
    <scope>NUCLEOTIDE SEQUENCE [LARGE SCALE GENOMIC DNA]</scope>
    <source>
        <strain>ATCC MYA-4620 / CBS 123657 / FGSC 9075 / NRRL 31084 / PH-1</strain>
    </source>
</reference>
<reference key="2">
    <citation type="journal article" date="2010" name="Nature">
        <title>Comparative genomics reveals mobile pathogenicity chromosomes in Fusarium.</title>
        <authorList>
            <person name="Ma L.-J."/>
            <person name="van der Does H.C."/>
            <person name="Borkovich K.A."/>
            <person name="Coleman J.J."/>
            <person name="Daboussi M.-J."/>
            <person name="Di Pietro A."/>
            <person name="Dufresne M."/>
            <person name="Freitag M."/>
            <person name="Grabherr M."/>
            <person name="Henrissat B."/>
            <person name="Houterman P.M."/>
            <person name="Kang S."/>
            <person name="Shim W.-B."/>
            <person name="Woloshuk C."/>
            <person name="Xie X."/>
            <person name="Xu J.-R."/>
            <person name="Antoniw J."/>
            <person name="Baker S.E."/>
            <person name="Bluhm B.H."/>
            <person name="Breakspear A."/>
            <person name="Brown D.W."/>
            <person name="Butchko R.A.E."/>
            <person name="Chapman S."/>
            <person name="Coulson R."/>
            <person name="Coutinho P.M."/>
            <person name="Danchin E.G.J."/>
            <person name="Diener A."/>
            <person name="Gale L.R."/>
            <person name="Gardiner D.M."/>
            <person name="Goff S."/>
            <person name="Hammond-Kosack K.E."/>
            <person name="Hilburn K."/>
            <person name="Hua-Van A."/>
            <person name="Jonkers W."/>
            <person name="Kazan K."/>
            <person name="Kodira C.D."/>
            <person name="Koehrsen M."/>
            <person name="Kumar L."/>
            <person name="Lee Y.-H."/>
            <person name="Li L."/>
            <person name="Manners J.M."/>
            <person name="Miranda-Saavedra D."/>
            <person name="Mukherjee M."/>
            <person name="Park G."/>
            <person name="Park J."/>
            <person name="Park S.-Y."/>
            <person name="Proctor R.H."/>
            <person name="Regev A."/>
            <person name="Ruiz-Roldan M.C."/>
            <person name="Sain D."/>
            <person name="Sakthikumar S."/>
            <person name="Sykes S."/>
            <person name="Schwartz D.C."/>
            <person name="Turgeon B.G."/>
            <person name="Wapinski I."/>
            <person name="Yoder O."/>
            <person name="Young S."/>
            <person name="Zeng Q."/>
            <person name="Zhou S."/>
            <person name="Galagan J."/>
            <person name="Cuomo C.A."/>
            <person name="Kistler H.C."/>
            <person name="Rep M."/>
        </authorList>
    </citation>
    <scope>GENOME REANNOTATION</scope>
    <source>
        <strain>ATCC MYA-4620 / CBS 123657 / FGSC 9075 / NRRL 31084 / PH-1</strain>
    </source>
</reference>
<reference key="3">
    <citation type="journal article" date="2015" name="BMC Genomics">
        <title>The completed genome sequence of the pathogenic ascomycete fungus Fusarium graminearum.</title>
        <authorList>
            <person name="King R."/>
            <person name="Urban M."/>
            <person name="Hammond-Kosack M.C.U."/>
            <person name="Hassani-Pak K."/>
            <person name="Hammond-Kosack K.E."/>
        </authorList>
    </citation>
    <scope>NUCLEOTIDE SEQUENCE [LARGE SCALE GENOMIC DNA]</scope>
    <source>
        <strain>ATCC MYA-4620 / CBS 123657 / FGSC 9075 / NRRL 31084 / PH-1</strain>
    </source>
</reference>
<accession>Q4IC11</accession>
<accession>A0A0E0SLN6</accession>
<accession>V6RB59</accession>
<dbReference type="EMBL" id="DS231665">
    <property type="protein sequence ID" value="ESU11182.1"/>
    <property type="molecule type" value="Genomic_DNA"/>
</dbReference>
<dbReference type="EMBL" id="HG970334">
    <property type="protein sequence ID" value="CEF87349.1"/>
    <property type="molecule type" value="Genomic_DNA"/>
</dbReference>
<dbReference type="RefSeq" id="XP_011323758.1">
    <property type="nucleotide sequence ID" value="XM_011325456.1"/>
</dbReference>
<dbReference type="SMR" id="Q4IC11"/>
<dbReference type="FunCoup" id="Q4IC11">
    <property type="interactions" value="701"/>
</dbReference>
<dbReference type="STRING" id="229533.Q4IC11"/>
<dbReference type="GeneID" id="23552437"/>
<dbReference type="KEGG" id="fgr:FGSG_05247"/>
<dbReference type="VEuPathDB" id="FungiDB:FGRAMPH1_01G17455"/>
<dbReference type="eggNOG" id="KOG4071">
    <property type="taxonomic scope" value="Eukaryota"/>
</dbReference>
<dbReference type="HOGENOM" id="CLU_078274_0_0_1"/>
<dbReference type="InParanoid" id="Q4IC11"/>
<dbReference type="OrthoDB" id="90334at110618"/>
<dbReference type="Proteomes" id="UP000070720">
    <property type="component" value="Chromosome 3"/>
</dbReference>
<dbReference type="GO" id="GO:0000811">
    <property type="term" value="C:GINS complex"/>
    <property type="evidence" value="ECO:0007669"/>
    <property type="project" value="TreeGrafter"/>
</dbReference>
<dbReference type="GO" id="GO:0007059">
    <property type="term" value="P:chromosome segregation"/>
    <property type="evidence" value="ECO:0007669"/>
    <property type="project" value="UniProtKB-KW"/>
</dbReference>
<dbReference type="GO" id="GO:0006260">
    <property type="term" value="P:DNA replication"/>
    <property type="evidence" value="ECO:0007669"/>
    <property type="project" value="UniProtKB-KW"/>
</dbReference>
<dbReference type="GO" id="GO:0000727">
    <property type="term" value="P:double-strand break repair via break-induced replication"/>
    <property type="evidence" value="ECO:0007669"/>
    <property type="project" value="TreeGrafter"/>
</dbReference>
<dbReference type="CDD" id="cd11712">
    <property type="entry name" value="GINS_A_psf2"/>
    <property type="match status" value="1"/>
</dbReference>
<dbReference type="CDD" id="cd21694">
    <property type="entry name" value="GINS_B_Psf2"/>
    <property type="match status" value="1"/>
</dbReference>
<dbReference type="FunFam" id="1.20.58.1020:FF:000001">
    <property type="entry name" value="DNA replication complex GINS protein PSF2"/>
    <property type="match status" value="1"/>
</dbReference>
<dbReference type="FunFam" id="3.40.5.50:FF:000001">
    <property type="entry name" value="DNA replication complex GINS protein PSF2"/>
    <property type="match status" value="1"/>
</dbReference>
<dbReference type="Gene3D" id="1.20.58.1020">
    <property type="match status" value="1"/>
</dbReference>
<dbReference type="Gene3D" id="3.40.5.50">
    <property type="match status" value="1"/>
</dbReference>
<dbReference type="InterPro" id="IPR021151">
    <property type="entry name" value="GINS_A"/>
</dbReference>
<dbReference type="InterPro" id="IPR036224">
    <property type="entry name" value="GINS_bundle-like_dom_sf"/>
</dbReference>
<dbReference type="InterPro" id="IPR007257">
    <property type="entry name" value="GINS_Psf2"/>
</dbReference>
<dbReference type="InterPro" id="IPR056784">
    <property type="entry name" value="PSF2_N"/>
</dbReference>
<dbReference type="PANTHER" id="PTHR12772">
    <property type="entry name" value="DNA REPLICATION COMPLEX GINS PROTEIN PSF2"/>
    <property type="match status" value="1"/>
</dbReference>
<dbReference type="PANTHER" id="PTHR12772:SF0">
    <property type="entry name" value="DNA REPLICATION COMPLEX GINS PROTEIN PSF2"/>
    <property type="match status" value="1"/>
</dbReference>
<dbReference type="Pfam" id="PF25005">
    <property type="entry name" value="PSF2_N"/>
    <property type="match status" value="1"/>
</dbReference>
<dbReference type="Pfam" id="PF05916">
    <property type="entry name" value="Sld5"/>
    <property type="match status" value="1"/>
</dbReference>
<dbReference type="PIRSF" id="PIRSF028998">
    <property type="entry name" value="GINS_Psf2_subgr"/>
    <property type="match status" value="1"/>
</dbReference>
<dbReference type="SUPFAM" id="SSF158573">
    <property type="entry name" value="GINS helical bundle-like"/>
    <property type="match status" value="1"/>
</dbReference>
<dbReference type="SUPFAM" id="SSF160059">
    <property type="entry name" value="PriA/YqbF domain"/>
    <property type="match status" value="1"/>
</dbReference>
<comment type="function">
    <text evidence="1">The GINS complex plays an essential role in the initiation of DNA replication. Has a role in chromosome segregation (By similarity).</text>
</comment>
<comment type="subunit">
    <text evidence="1">Component of the GINS complex which is a heterotetramer of SLD5, PSF1, PSF2 and PSF3.</text>
</comment>
<comment type="subcellular location">
    <subcellularLocation>
        <location evidence="1">Nucleus</location>
    </subcellularLocation>
</comment>
<comment type="similarity">
    <text evidence="3">Belongs to the GINS2/PSF2 family.</text>
</comment>
<protein>
    <recommendedName>
        <fullName>DNA replication complex GINS protein PSF2</fullName>
    </recommendedName>
</protein>